<feature type="chain" id="PRO_0000433481" description="DNA repair protein RAD4">
    <location>
        <begin position="1"/>
        <end position="865"/>
    </location>
</feature>
<feature type="region of interest" description="Disordered" evidence="2">
    <location>
        <begin position="21"/>
        <end position="57"/>
    </location>
</feature>
<feature type="region of interest" description="Disordered" evidence="2">
    <location>
        <begin position="75"/>
        <end position="101"/>
    </location>
</feature>
<feature type="region of interest" description="Disordered" evidence="2">
    <location>
        <begin position="290"/>
        <end position="318"/>
    </location>
</feature>
<feature type="region of interest" description="Disordered" evidence="2">
    <location>
        <begin position="804"/>
        <end position="833"/>
    </location>
</feature>
<feature type="short sequence motif" description="Nuclear localization signal" evidence="1">
    <location>
        <begin position="34"/>
        <end position="41"/>
    </location>
</feature>
<feature type="compositionally biased region" description="Basic and acidic residues" evidence="2">
    <location>
        <begin position="37"/>
        <end position="57"/>
    </location>
</feature>
<feature type="compositionally biased region" description="Acidic residues" evidence="2">
    <location>
        <begin position="76"/>
        <end position="88"/>
    </location>
</feature>
<feature type="compositionally biased region" description="Basic and acidic residues" evidence="2">
    <location>
        <begin position="806"/>
        <end position="833"/>
    </location>
</feature>
<organism>
    <name type="scientific">Arabidopsis thaliana</name>
    <name type="common">Mouse-ear cress</name>
    <dbReference type="NCBI Taxonomy" id="3702"/>
    <lineage>
        <taxon>Eukaryota</taxon>
        <taxon>Viridiplantae</taxon>
        <taxon>Streptophyta</taxon>
        <taxon>Embryophyta</taxon>
        <taxon>Tracheophyta</taxon>
        <taxon>Spermatophyta</taxon>
        <taxon>Magnoliopsida</taxon>
        <taxon>eudicotyledons</taxon>
        <taxon>Gunneridae</taxon>
        <taxon>Pentapetalae</taxon>
        <taxon>rosids</taxon>
        <taxon>malvids</taxon>
        <taxon>Brassicales</taxon>
        <taxon>Brassicaceae</taxon>
        <taxon>Camelineae</taxon>
        <taxon>Arabidopsis</taxon>
    </lineage>
</organism>
<accession>Q8W489</accession>
<dbReference type="EMBL" id="AB008270">
    <property type="status" value="NOT_ANNOTATED_CDS"/>
    <property type="molecule type" value="Genomic_DNA"/>
</dbReference>
<dbReference type="EMBL" id="CP002688">
    <property type="protein sequence ID" value="AED92319.1"/>
    <property type="molecule type" value="Genomic_DNA"/>
</dbReference>
<dbReference type="EMBL" id="CP002688">
    <property type="protein sequence ID" value="AED92320.1"/>
    <property type="molecule type" value="Genomic_DNA"/>
</dbReference>
<dbReference type="EMBL" id="AY062755">
    <property type="protein sequence ID" value="AAL32833.1"/>
    <property type="molecule type" value="mRNA"/>
</dbReference>
<dbReference type="EMBL" id="BT010359">
    <property type="protein sequence ID" value="AAQ56802.1"/>
    <property type="molecule type" value="mRNA"/>
</dbReference>
<dbReference type="RefSeq" id="NP_001031894.1">
    <property type="nucleotide sequence ID" value="NM_001036817.3"/>
</dbReference>
<dbReference type="RefSeq" id="NP_197166.2">
    <property type="nucleotide sequence ID" value="NM_121669.3"/>
</dbReference>
<dbReference type="SMR" id="Q8W489"/>
<dbReference type="FunCoup" id="Q8W489">
    <property type="interactions" value="3207"/>
</dbReference>
<dbReference type="STRING" id="3702.Q8W489"/>
<dbReference type="PaxDb" id="3702-AT5G16630.2"/>
<dbReference type="ProteomicsDB" id="236703"/>
<dbReference type="EnsemblPlants" id="AT5G16630.1">
    <property type="protein sequence ID" value="AT5G16630.1"/>
    <property type="gene ID" value="AT5G16630"/>
</dbReference>
<dbReference type="EnsemblPlants" id="AT5G16630.2">
    <property type="protein sequence ID" value="AT5G16630.2"/>
    <property type="gene ID" value="AT5G16630"/>
</dbReference>
<dbReference type="GeneID" id="831525"/>
<dbReference type="Gramene" id="AT5G16630.1">
    <property type="protein sequence ID" value="AT5G16630.1"/>
    <property type="gene ID" value="AT5G16630"/>
</dbReference>
<dbReference type="Gramene" id="AT5G16630.2">
    <property type="protein sequence ID" value="AT5G16630.2"/>
    <property type="gene ID" value="AT5G16630"/>
</dbReference>
<dbReference type="KEGG" id="ath:AT5G16630"/>
<dbReference type="Araport" id="AT5G16630"/>
<dbReference type="TAIR" id="AT5G16630">
    <property type="gene designation" value="RAD4"/>
</dbReference>
<dbReference type="eggNOG" id="KOG2179">
    <property type="taxonomic scope" value="Eukaryota"/>
</dbReference>
<dbReference type="HOGENOM" id="CLU_012473_0_0_1"/>
<dbReference type="InParanoid" id="Q8W489"/>
<dbReference type="OMA" id="CTEFKDT"/>
<dbReference type="OrthoDB" id="300780at2759"/>
<dbReference type="PhylomeDB" id="Q8W489"/>
<dbReference type="PRO" id="PR:Q8W489"/>
<dbReference type="Proteomes" id="UP000006548">
    <property type="component" value="Chromosome 5"/>
</dbReference>
<dbReference type="ExpressionAtlas" id="Q8W489">
    <property type="expression patterns" value="baseline and differential"/>
</dbReference>
<dbReference type="GO" id="GO:0009507">
    <property type="term" value="C:chloroplast"/>
    <property type="evidence" value="ECO:0007005"/>
    <property type="project" value="TAIR"/>
</dbReference>
<dbReference type="GO" id="GO:0005634">
    <property type="term" value="C:nucleus"/>
    <property type="evidence" value="ECO:0000314"/>
    <property type="project" value="UniProtKB"/>
</dbReference>
<dbReference type="GO" id="GO:0003684">
    <property type="term" value="F:damaged DNA binding"/>
    <property type="evidence" value="ECO:0007669"/>
    <property type="project" value="InterPro"/>
</dbReference>
<dbReference type="GO" id="GO:0000724">
    <property type="term" value="P:double-strand break repair via homologous recombination"/>
    <property type="evidence" value="ECO:0000315"/>
    <property type="project" value="UniProtKB"/>
</dbReference>
<dbReference type="GO" id="GO:0006289">
    <property type="term" value="P:nucleotide-excision repair"/>
    <property type="evidence" value="ECO:0000315"/>
    <property type="project" value="UniProtKB"/>
</dbReference>
<dbReference type="GO" id="GO:0009411">
    <property type="term" value="P:response to UV"/>
    <property type="evidence" value="ECO:0000315"/>
    <property type="project" value="UniProtKB"/>
</dbReference>
<dbReference type="GO" id="GO:0009650">
    <property type="term" value="P:UV protection"/>
    <property type="evidence" value="ECO:0000315"/>
    <property type="project" value="UniProtKB"/>
</dbReference>
<dbReference type="FunFam" id="2.20.20.110:FF:000002">
    <property type="entry name" value="DNA repair protein Rad4 family"/>
    <property type="match status" value="1"/>
</dbReference>
<dbReference type="FunFam" id="3.30.70.2460:FF:000001">
    <property type="entry name" value="DNA repair protein Rad4 family"/>
    <property type="match status" value="1"/>
</dbReference>
<dbReference type="Gene3D" id="2.20.20.110">
    <property type="entry name" value="Rad4, beta-hairpin domain BHD1"/>
    <property type="match status" value="1"/>
</dbReference>
<dbReference type="Gene3D" id="3.30.70.2460">
    <property type="entry name" value="Rad4, beta-hairpin domain BHD3"/>
    <property type="match status" value="1"/>
</dbReference>
<dbReference type="Gene3D" id="3.90.260.10">
    <property type="entry name" value="Transglutaminase-like"/>
    <property type="match status" value="1"/>
</dbReference>
<dbReference type="InterPro" id="IPR018327">
    <property type="entry name" value="BHD_2"/>
</dbReference>
<dbReference type="InterPro" id="IPR004583">
    <property type="entry name" value="DNA_repair_Rad4"/>
</dbReference>
<dbReference type="InterPro" id="IPR038765">
    <property type="entry name" value="Papain-like_cys_pep_sf"/>
</dbReference>
<dbReference type="InterPro" id="IPR018325">
    <property type="entry name" value="Rad4/PNGase_transGLS-fold"/>
</dbReference>
<dbReference type="InterPro" id="IPR018326">
    <property type="entry name" value="Rad4_beta-hairpin_dom1"/>
</dbReference>
<dbReference type="InterPro" id="IPR018328">
    <property type="entry name" value="Rad4_beta-hairpin_dom3"/>
</dbReference>
<dbReference type="InterPro" id="IPR042488">
    <property type="entry name" value="Rad4_BHD3_sf"/>
</dbReference>
<dbReference type="InterPro" id="IPR002931">
    <property type="entry name" value="Transglutaminase-like"/>
</dbReference>
<dbReference type="InterPro" id="IPR036985">
    <property type="entry name" value="Transglutaminase-like_sf"/>
</dbReference>
<dbReference type="PANTHER" id="PTHR12135:SF0">
    <property type="entry name" value="DNA REPAIR PROTEIN COMPLEMENTING XP-C CELLS"/>
    <property type="match status" value="1"/>
</dbReference>
<dbReference type="PANTHER" id="PTHR12135">
    <property type="entry name" value="DNA REPAIR PROTEIN XP-C / RAD4"/>
    <property type="match status" value="1"/>
</dbReference>
<dbReference type="Pfam" id="PF10403">
    <property type="entry name" value="BHD_1"/>
    <property type="match status" value="1"/>
</dbReference>
<dbReference type="Pfam" id="PF10404">
    <property type="entry name" value="BHD_2"/>
    <property type="match status" value="1"/>
</dbReference>
<dbReference type="Pfam" id="PF10405">
    <property type="entry name" value="BHD_3"/>
    <property type="match status" value="1"/>
</dbReference>
<dbReference type="Pfam" id="PF03835">
    <property type="entry name" value="Rad4"/>
    <property type="match status" value="1"/>
</dbReference>
<dbReference type="Pfam" id="PF01841">
    <property type="entry name" value="Transglut_core"/>
    <property type="match status" value="1"/>
</dbReference>
<dbReference type="SMART" id="SM01030">
    <property type="entry name" value="BHD_1"/>
    <property type="match status" value="1"/>
</dbReference>
<dbReference type="SMART" id="SM01031">
    <property type="entry name" value="BHD_2"/>
    <property type="match status" value="1"/>
</dbReference>
<dbReference type="SMART" id="SM01032">
    <property type="entry name" value="BHD_3"/>
    <property type="match status" value="1"/>
</dbReference>
<dbReference type="SUPFAM" id="SSF54001">
    <property type="entry name" value="Cysteine proteinases"/>
    <property type="match status" value="1"/>
</dbReference>
<protein>
    <recommendedName>
        <fullName evidence="9">DNA repair protein RAD4</fullName>
    </recommendedName>
</protein>
<evidence type="ECO:0000255" key="1">
    <source>
        <dbReference type="PROSITE-ProRule" id="PRU00768"/>
    </source>
</evidence>
<evidence type="ECO:0000256" key="2">
    <source>
        <dbReference type="SAM" id="MobiDB-lite"/>
    </source>
</evidence>
<evidence type="ECO:0000269" key="3">
    <source>
    </source>
</evidence>
<evidence type="ECO:0000269" key="4">
    <source>
    </source>
</evidence>
<evidence type="ECO:0000305" key="5"/>
<evidence type="ECO:0000305" key="6">
    <source>
    </source>
</evidence>
<evidence type="ECO:0000312" key="7">
    <source>
        <dbReference type="Araport" id="AT5G16630"/>
    </source>
</evidence>
<evidence type="ECO:0000312" key="8">
    <source>
        <dbReference type="EMBL" id="AAL32833.1"/>
    </source>
</evidence>
<evidence type="ECO:0000312" key="9">
    <source>
        <dbReference type="EMBL" id="AED92319.1"/>
    </source>
</evidence>
<gene>
    <name type="primary">RAD4</name>
    <name evidence="7" type="ordered locus">At5g16630</name>
    <name evidence="8" type="ORF">MTG13.7</name>
</gene>
<keyword id="KW-0227">DNA damage</keyword>
<keyword id="KW-0234">DNA repair</keyword>
<keyword id="KW-0539">Nucleus</keyword>
<keyword id="KW-1185">Reference proteome</keyword>
<reference key="1">
    <citation type="journal article" date="1997" name="DNA Res.">
        <title>Structural analysis of Arabidopsis thaliana chromosome 5. III. Sequence features of the regions of 1,191,918 bp covered by seventeen physically assigned P1 clones.</title>
        <authorList>
            <person name="Nakamura Y."/>
            <person name="Sato S."/>
            <person name="Kaneko T."/>
            <person name="Kotani H."/>
            <person name="Asamizu E."/>
            <person name="Miyajima N."/>
            <person name="Tabata S."/>
        </authorList>
    </citation>
    <scope>NUCLEOTIDE SEQUENCE [LARGE SCALE GENOMIC DNA]</scope>
    <source>
        <strain>cv. Columbia</strain>
    </source>
</reference>
<reference key="2">
    <citation type="journal article" date="2017" name="Plant J.">
        <title>Araport11: a complete reannotation of the Arabidopsis thaliana reference genome.</title>
        <authorList>
            <person name="Cheng C.Y."/>
            <person name="Krishnakumar V."/>
            <person name="Chan A.P."/>
            <person name="Thibaud-Nissen F."/>
            <person name="Schobel S."/>
            <person name="Town C.D."/>
        </authorList>
    </citation>
    <scope>GENOME REANNOTATION</scope>
    <source>
        <strain>cv. Columbia</strain>
    </source>
</reference>
<reference key="3">
    <citation type="journal article" date="2003" name="Science">
        <title>Empirical analysis of transcriptional activity in the Arabidopsis genome.</title>
        <authorList>
            <person name="Yamada K."/>
            <person name="Lim J."/>
            <person name="Dale J.M."/>
            <person name="Chen H."/>
            <person name="Shinn P."/>
            <person name="Palm C.J."/>
            <person name="Southwick A.M."/>
            <person name="Wu H.C."/>
            <person name="Kim C.J."/>
            <person name="Nguyen M."/>
            <person name="Pham P.K."/>
            <person name="Cheuk R.F."/>
            <person name="Karlin-Newmann G."/>
            <person name="Liu S.X."/>
            <person name="Lam B."/>
            <person name="Sakano H."/>
            <person name="Wu T."/>
            <person name="Yu G."/>
            <person name="Miranda M."/>
            <person name="Quach H.L."/>
            <person name="Tripp M."/>
            <person name="Chang C.H."/>
            <person name="Lee J.M."/>
            <person name="Toriumi M.J."/>
            <person name="Chan M.M."/>
            <person name="Tang C.C."/>
            <person name="Onodera C.S."/>
            <person name="Deng J.M."/>
            <person name="Akiyama K."/>
            <person name="Ansari Y."/>
            <person name="Arakawa T."/>
            <person name="Banh J."/>
            <person name="Banno F."/>
            <person name="Bowser L."/>
            <person name="Brooks S.Y."/>
            <person name="Carninci P."/>
            <person name="Chao Q."/>
            <person name="Choy N."/>
            <person name="Enju A."/>
            <person name="Goldsmith A.D."/>
            <person name="Gurjal M."/>
            <person name="Hansen N.F."/>
            <person name="Hayashizaki Y."/>
            <person name="Johnson-Hopson C."/>
            <person name="Hsuan V.W."/>
            <person name="Iida K."/>
            <person name="Karnes M."/>
            <person name="Khan S."/>
            <person name="Koesema E."/>
            <person name="Ishida J."/>
            <person name="Jiang P.X."/>
            <person name="Jones T."/>
            <person name="Kawai J."/>
            <person name="Kamiya A."/>
            <person name="Meyers C."/>
            <person name="Nakajima M."/>
            <person name="Narusaka M."/>
            <person name="Seki M."/>
            <person name="Sakurai T."/>
            <person name="Satou M."/>
            <person name="Tamse R."/>
            <person name="Vaysberg M."/>
            <person name="Wallender E.K."/>
            <person name="Wong C."/>
            <person name="Yamamura Y."/>
            <person name="Yuan S."/>
            <person name="Shinozaki K."/>
            <person name="Davis R.W."/>
            <person name="Theologis A."/>
            <person name="Ecker J.R."/>
        </authorList>
    </citation>
    <scope>NUCLEOTIDE SEQUENCE [LARGE SCALE MRNA]</scope>
    <source>
        <strain>cv. Columbia</strain>
    </source>
</reference>
<reference key="4">
    <citation type="journal article" date="2006" name="Plant Mol. Biol.">
        <title>CENTRIN2 interacts with the Arabidopsis homolog of the human XPC protein (AtRAD4) and contributes to efficient synthesis-dependent repair of bulky DNA lesions.</title>
        <authorList>
            <person name="Liang L."/>
            <person name="Flury S."/>
            <person name="Kalck V."/>
            <person name="Hohn B."/>
            <person name="Molinier J."/>
        </authorList>
    </citation>
    <scope>INTERACTION WITH CML19</scope>
</reference>
<reference key="5">
    <citation type="journal article" date="2017" name="Genes (Basel)">
        <title>RAD4 and RAD23/HMR contribute to Arabidopsis UV tolerance.</title>
        <authorList>
            <person name="Lahari T."/>
            <person name="Lazaro J."/>
            <person name="Schroeder D.F."/>
        </authorList>
    </citation>
    <scope>FUNCTION</scope>
    <scope>DISRUPTION PHENOTYPE</scope>
    <scope>SUBCELLULAR LOCATION</scope>
    <scope>INTERACTION WITH RAD23B AND PTAC12/HMR/PAP5</scope>
    <source>
        <strain>cv. Columbia</strain>
    </source>
</reference>
<proteinExistence type="evidence at protein level"/>
<comment type="function">
    <text evidence="4 6">Essential protein (PubMed:29283431). May have a role in the nucleotide excision repair (NER) pathway (Probable). Promotes UV tolerance via dark repair mechanism (nucleotide excision repair) (PubMed:29283431).</text>
</comment>
<comment type="subunit">
    <text evidence="3 4">Interacts with CML19. Calcium is required for this interaction. Binds to RAD23B and PTAC12/HMR/PAP5 (PubMed:29283431).</text>
</comment>
<comment type="subcellular location">
    <subcellularLocation>
        <location evidence="1 4">Nucleus</location>
    </subcellularLocation>
</comment>
<comment type="disruption phenotype">
    <text evidence="4">Probably lethal.</text>
</comment>
<comment type="similarity">
    <text evidence="5">Belongs to the XPC family.</text>
</comment>
<sequence length="865" mass="96285">MKSRSESKNCRLAQASRVAVNKVLDKSSARGSRGKKKQDDNCDSAKRDKGVNGKGKQALDARLIDNVLEDRGCGNVDDDEMNDSDWEDCPIPSLDSTVDDNNVDDTRELTIEFDDDVPDAKKQKNAYRATAEDKVRAELVHKVHLLCLLARGRIVDSACNDPLIQAALLSLLPSYLTKVSNLEKVTVKDIAPLLRWVRENFSVSCSPSSEKSFRTSLAFALESRKGTAEELAALAVALLRALKLTTRFVSILDVASLKPGADRNESSGQNRAKMKHGIFRTSTLMVPKQQAISSYPKKSSSHVKNKSPFEKPQLGNPLGSDQVQDNAVNSSCEAGMSIKSDGTRRKGDVEFERQIAMALSATADNQQSSQVNNTKKVREITKISNSSSVSDQVISTAFGSKKVDSPLCWLEVYCNGENMDGKWVHVDAVNGMIDAEQNIEAAAAACKTVLRYVVAFAAGGAKDVTRRYCTKWHTISSKRVSSVWWDMVLAPLVHLESGATHDEDIALRNFNGLNPVSSRASSSSSSFGIRSALEDMELATRALTESLPTNQQAYKSHEIYAIEKWLHKNQILHPKGPVLGFCSGHPVYPRTCVQTLKTKERWLRDGLQLKANEVPSKILKRNSKFKKVKDFEDGDNNIKGGSSCMELYGKWQMEPLCLPPAVNGIVPKNERGQVDVWSEKCLPPGTVHLRFPRIFAVAKRFGIDYAPAMVGFEYRSGGATPIFEGIVVCTEFKDTILEAYAEEQEKKEEEERRRNEAQAASRWYQLLSSILTRERLKNRYANNSNDVEAKSLEVNSETVVKAKNVKAPEKQRVAKRGEKSRVRKSRNEDESHEHVFLDEEETFDEETSVKTKRCKCGFSVEVEQM</sequence>
<name>RAD4_ARATH</name>